<protein>
    <recommendedName>
        <fullName>Transcription initiation factor TFIID subunit 1-like</fullName>
    </recommendedName>
    <alternativeName>
        <fullName>TAF(II)210</fullName>
    </alternativeName>
    <alternativeName>
        <fullName>TBP-associated factor 1-like</fullName>
    </alternativeName>
    <alternativeName>
        <fullName>TBP-associated factor 210 kDa</fullName>
    </alternativeName>
    <alternativeName>
        <fullName>Transcription initiation factor TFIID 210 kDa subunit</fullName>
    </alternativeName>
</protein>
<dbReference type="EMBL" id="AF390562">
    <property type="protein sequence ID" value="AAN40840.1"/>
    <property type="molecule type" value="mRNA"/>
</dbReference>
<dbReference type="CCDS" id="CCDS35003.1"/>
<dbReference type="RefSeq" id="NP_722516.1">
    <property type="nucleotide sequence ID" value="NM_153809.2"/>
</dbReference>
<dbReference type="PDB" id="3HMH">
    <property type="method" value="X-ray"/>
    <property type="resolution" value="2.05 A"/>
    <property type="chains" value="A=1523-1654"/>
</dbReference>
<dbReference type="PDB" id="5IGL">
    <property type="method" value="X-ray"/>
    <property type="resolution" value="2.10 A"/>
    <property type="chains" value="A=1523-1654"/>
</dbReference>
<dbReference type="PDBsum" id="3HMH"/>
<dbReference type="PDBsum" id="5IGL"/>
<dbReference type="SMR" id="Q8IZX4"/>
<dbReference type="BioGRID" id="126514">
    <property type="interactions" value="22"/>
</dbReference>
<dbReference type="FunCoup" id="Q8IZX4">
    <property type="interactions" value="175"/>
</dbReference>
<dbReference type="IntAct" id="Q8IZX4">
    <property type="interactions" value="8"/>
</dbReference>
<dbReference type="MINT" id="Q8IZX4"/>
<dbReference type="STRING" id="9606.ENSP00000418379"/>
<dbReference type="BindingDB" id="Q8IZX4"/>
<dbReference type="ChEMBL" id="CHEMBL3108641"/>
<dbReference type="iPTMnet" id="Q8IZX4"/>
<dbReference type="PhosphoSitePlus" id="Q8IZX4"/>
<dbReference type="BioMuta" id="TAF1L"/>
<dbReference type="DMDM" id="57013082"/>
<dbReference type="jPOST" id="Q8IZX4"/>
<dbReference type="MassIVE" id="Q8IZX4"/>
<dbReference type="PaxDb" id="9606-ENSP00000418379"/>
<dbReference type="PeptideAtlas" id="Q8IZX4"/>
<dbReference type="ProteomicsDB" id="71440"/>
<dbReference type="Pumba" id="Q8IZX4"/>
<dbReference type="Antibodypedia" id="25077">
    <property type="antibodies" value="67 antibodies from 21 providers"/>
</dbReference>
<dbReference type="DNASU" id="138474"/>
<dbReference type="Ensembl" id="ENST00000242310.4">
    <property type="protein sequence ID" value="ENSP00000418379.1"/>
    <property type="gene ID" value="ENSG00000122728.6"/>
</dbReference>
<dbReference type="GeneID" id="138474"/>
<dbReference type="KEGG" id="hsa:138474"/>
<dbReference type="MANE-Select" id="ENST00000242310.4">
    <property type="protein sequence ID" value="ENSP00000418379.1"/>
    <property type="RefSeq nucleotide sequence ID" value="NM_153809.2"/>
    <property type="RefSeq protein sequence ID" value="NP_722516.1"/>
</dbReference>
<dbReference type="UCSC" id="uc003zrg.1">
    <property type="organism name" value="human"/>
</dbReference>
<dbReference type="AGR" id="HGNC:18056"/>
<dbReference type="CTD" id="138474"/>
<dbReference type="DisGeNET" id="138474"/>
<dbReference type="GeneCards" id="TAF1L"/>
<dbReference type="HGNC" id="HGNC:18056">
    <property type="gene designation" value="TAF1L"/>
</dbReference>
<dbReference type="HPA" id="ENSG00000122728">
    <property type="expression patterns" value="Group enriched (retina, testis)"/>
</dbReference>
<dbReference type="MIM" id="607798">
    <property type="type" value="gene"/>
</dbReference>
<dbReference type="neXtProt" id="NX_Q8IZX4"/>
<dbReference type="OpenTargets" id="ENSG00000122728"/>
<dbReference type="PharmGKB" id="PA134947802"/>
<dbReference type="VEuPathDB" id="HostDB:ENSG00000122728"/>
<dbReference type="eggNOG" id="KOG0008">
    <property type="taxonomic scope" value="Eukaryota"/>
</dbReference>
<dbReference type="GeneTree" id="ENSGT00940000155242"/>
<dbReference type="HOGENOM" id="CLU_000572_3_0_1"/>
<dbReference type="InParanoid" id="Q8IZX4"/>
<dbReference type="OMA" id="RENVRKC"/>
<dbReference type="OrthoDB" id="5752at2759"/>
<dbReference type="PAN-GO" id="Q8IZX4">
    <property type="GO annotations" value="4 GO annotations based on evolutionary models"/>
</dbReference>
<dbReference type="PhylomeDB" id="Q8IZX4"/>
<dbReference type="TreeFam" id="TF313573"/>
<dbReference type="PathwayCommons" id="Q8IZX4"/>
<dbReference type="Reactome" id="R-HSA-167161">
    <property type="pathway name" value="HIV Transcription Initiation"/>
</dbReference>
<dbReference type="Reactome" id="R-HSA-167162">
    <property type="pathway name" value="RNA Polymerase II HIV Promoter Escape"/>
</dbReference>
<dbReference type="Reactome" id="R-HSA-167172">
    <property type="pathway name" value="Transcription of the HIV genome"/>
</dbReference>
<dbReference type="Reactome" id="R-HSA-674695">
    <property type="pathway name" value="RNA Polymerase II Pre-transcription Events"/>
</dbReference>
<dbReference type="Reactome" id="R-HSA-6804756">
    <property type="pathway name" value="Regulation of TP53 Activity through Phosphorylation"/>
</dbReference>
<dbReference type="Reactome" id="R-HSA-73776">
    <property type="pathway name" value="RNA Polymerase II Promoter Escape"/>
</dbReference>
<dbReference type="Reactome" id="R-HSA-73779">
    <property type="pathway name" value="RNA Polymerase II Transcription Pre-Initiation And Promoter Opening"/>
</dbReference>
<dbReference type="Reactome" id="R-HSA-75953">
    <property type="pathway name" value="RNA Polymerase II Transcription Initiation"/>
</dbReference>
<dbReference type="Reactome" id="R-HSA-76042">
    <property type="pathway name" value="RNA Polymerase II Transcription Initiation And Promoter Clearance"/>
</dbReference>
<dbReference type="SignaLink" id="Q8IZX4"/>
<dbReference type="BioGRID-ORCS" id="138474">
    <property type="hits" value="16 hits in 1147 CRISPR screens"/>
</dbReference>
<dbReference type="EvolutionaryTrace" id="Q8IZX4"/>
<dbReference type="GenomeRNAi" id="138474"/>
<dbReference type="Pharos" id="Q8IZX4">
    <property type="development level" value="Tchem"/>
</dbReference>
<dbReference type="PRO" id="PR:Q8IZX4"/>
<dbReference type="Proteomes" id="UP000005640">
    <property type="component" value="Chromosome 9"/>
</dbReference>
<dbReference type="RNAct" id="Q8IZX4">
    <property type="molecule type" value="protein"/>
</dbReference>
<dbReference type="Bgee" id="ENSG00000122728">
    <property type="expression patterns" value="Expressed in male germ line stem cell (sensu Vertebrata) in testis and 9 other cell types or tissues"/>
</dbReference>
<dbReference type="GO" id="GO:0005654">
    <property type="term" value="C:nucleoplasm"/>
    <property type="evidence" value="ECO:0000304"/>
    <property type="project" value="Reactome"/>
</dbReference>
<dbReference type="GO" id="GO:0005669">
    <property type="term" value="C:transcription factor TFIID complex"/>
    <property type="evidence" value="ECO:0000318"/>
    <property type="project" value="GO_Central"/>
</dbReference>
<dbReference type="GO" id="GO:0003677">
    <property type="term" value="F:DNA binding"/>
    <property type="evidence" value="ECO:0007669"/>
    <property type="project" value="UniProtKB-KW"/>
</dbReference>
<dbReference type="GO" id="GO:0004402">
    <property type="term" value="F:histone acetyltransferase activity"/>
    <property type="evidence" value="ECO:0000250"/>
    <property type="project" value="UniProtKB"/>
</dbReference>
<dbReference type="GO" id="GO:0070577">
    <property type="term" value="F:lysine-acetylated histone binding"/>
    <property type="evidence" value="ECO:0000314"/>
    <property type="project" value="UniProtKB"/>
</dbReference>
<dbReference type="GO" id="GO:0004674">
    <property type="term" value="F:protein serine/threonine kinase activity"/>
    <property type="evidence" value="ECO:0000250"/>
    <property type="project" value="UniProtKB"/>
</dbReference>
<dbReference type="GO" id="GO:0016251">
    <property type="term" value="F:RNA polymerase II general transcription initiation factor activity"/>
    <property type="evidence" value="ECO:0000318"/>
    <property type="project" value="GO_Central"/>
</dbReference>
<dbReference type="GO" id="GO:0017025">
    <property type="term" value="F:TBP-class protein binding"/>
    <property type="evidence" value="ECO:0000353"/>
    <property type="project" value="UniProtKB"/>
</dbReference>
<dbReference type="GO" id="GO:0007140">
    <property type="term" value="P:male meiotic nuclear division"/>
    <property type="evidence" value="ECO:0000270"/>
    <property type="project" value="UniProtKB"/>
</dbReference>
<dbReference type="GO" id="GO:0045893">
    <property type="term" value="P:positive regulation of DNA-templated transcription"/>
    <property type="evidence" value="ECO:0000314"/>
    <property type="project" value="UniProtKB"/>
</dbReference>
<dbReference type="GO" id="GO:0006357">
    <property type="term" value="P:regulation of transcription by RNA polymerase II"/>
    <property type="evidence" value="ECO:0000314"/>
    <property type="project" value="UniProtKB"/>
</dbReference>
<dbReference type="GO" id="GO:0051123">
    <property type="term" value="P:RNA polymerase II preinitiation complex assembly"/>
    <property type="evidence" value="ECO:0000318"/>
    <property type="project" value="GO_Central"/>
</dbReference>
<dbReference type="CDD" id="cd05511">
    <property type="entry name" value="Bromo_TFIID"/>
    <property type="match status" value="2"/>
</dbReference>
<dbReference type="FunFam" id="1.10.1100.10:FF:000001">
    <property type="entry name" value="Transcription initiation factor TFIID subunit"/>
    <property type="match status" value="1"/>
</dbReference>
<dbReference type="FunFam" id="1.20.920.10:FF:000019">
    <property type="entry name" value="Transcription initiation factor TFIID subunit"/>
    <property type="match status" value="1"/>
</dbReference>
<dbReference type="FunFam" id="1.20.920.10:FF:000020">
    <property type="entry name" value="Transcription initiation factor TFIID subunit"/>
    <property type="match status" value="1"/>
</dbReference>
<dbReference type="Gene3D" id="1.20.920.10">
    <property type="entry name" value="Bromodomain-like"/>
    <property type="match status" value="2"/>
</dbReference>
<dbReference type="Gene3D" id="1.10.1100.10">
    <property type="entry name" value="TAFII-230 TBP-binding domain"/>
    <property type="match status" value="1"/>
</dbReference>
<dbReference type="InterPro" id="IPR001487">
    <property type="entry name" value="Bromodomain"/>
</dbReference>
<dbReference type="InterPro" id="IPR036427">
    <property type="entry name" value="Bromodomain-like_sf"/>
</dbReference>
<dbReference type="InterPro" id="IPR018359">
    <property type="entry name" value="Bromodomain_CS"/>
</dbReference>
<dbReference type="InterPro" id="IPR040240">
    <property type="entry name" value="TAF1"/>
</dbReference>
<dbReference type="InterPro" id="IPR011177">
    <property type="entry name" value="TAF1_animal"/>
</dbReference>
<dbReference type="InterPro" id="IPR022591">
    <property type="entry name" value="TAF1_HAT_dom"/>
</dbReference>
<dbReference type="InterPro" id="IPR009067">
    <property type="entry name" value="TAF_II_230-bd"/>
</dbReference>
<dbReference type="InterPro" id="IPR036741">
    <property type="entry name" value="TAFII-230_TBP-bd_sf"/>
</dbReference>
<dbReference type="InterPro" id="IPR041670">
    <property type="entry name" value="Znf-CCHC_6"/>
</dbReference>
<dbReference type="PANTHER" id="PTHR13900">
    <property type="entry name" value="TRANSCRIPTION INITIATION FACTOR TFIID"/>
    <property type="match status" value="1"/>
</dbReference>
<dbReference type="PANTHER" id="PTHR13900:SF2">
    <property type="entry name" value="TRANSCRIPTION INITIATION FACTOR TFIID SUBUNIT 1-LIKE"/>
    <property type="match status" value="1"/>
</dbReference>
<dbReference type="Pfam" id="PF00439">
    <property type="entry name" value="Bromodomain"/>
    <property type="match status" value="2"/>
</dbReference>
<dbReference type="Pfam" id="PF12157">
    <property type="entry name" value="DUF3591"/>
    <property type="match status" value="1"/>
</dbReference>
<dbReference type="Pfam" id="PF09247">
    <property type="entry name" value="TBP-binding"/>
    <property type="match status" value="1"/>
</dbReference>
<dbReference type="Pfam" id="PF15288">
    <property type="entry name" value="zf-CCHC_6"/>
    <property type="match status" value="1"/>
</dbReference>
<dbReference type="PIRSF" id="PIRSF003047">
    <property type="entry name" value="TAF1_animal"/>
    <property type="match status" value="1"/>
</dbReference>
<dbReference type="PRINTS" id="PR00503">
    <property type="entry name" value="BROMODOMAIN"/>
</dbReference>
<dbReference type="SMART" id="SM00297">
    <property type="entry name" value="BROMO"/>
    <property type="match status" value="2"/>
</dbReference>
<dbReference type="SUPFAM" id="SSF47370">
    <property type="entry name" value="Bromodomain"/>
    <property type="match status" value="2"/>
</dbReference>
<dbReference type="SUPFAM" id="SSF47055">
    <property type="entry name" value="TAF(II)230 TBP-binding fragment"/>
    <property type="match status" value="1"/>
</dbReference>
<dbReference type="PROSITE" id="PS00633">
    <property type="entry name" value="BROMODOMAIN_1"/>
    <property type="match status" value="2"/>
</dbReference>
<dbReference type="PROSITE" id="PS50014">
    <property type="entry name" value="BROMODOMAIN_2"/>
    <property type="match status" value="2"/>
</dbReference>
<sequence>MRPGCDLLLRAAATVTAAIMSDSDSEEDSSGGGPFTLAGILFGNISGAGQLEGESVLDDECKKHLAGLGALGLGSLITELTANEELTGTGGALVNDEGWIRSTEDAVDYSDINEVAEDESQRHQQTMGSLQPLYHSDYDEDDYDADCEDIDCKLMPPPPPPPGPMKKDKDQDAITCVSESGEDIILPSIIAPSFLASEKVDFSSYSDSESEMGPQEATQAESEDGKLTLPLAGIMQHDATKLLPSVTELFPEFRPGKVLRFLHLFGPGKNVPSVWRSARRKRKKHRELIQEEQIQEVECSVESEVSQKSLWNYDYAPPPPPEQCLADDEITMMVPVESKFSQSTGDVDKVTDTKPRVAEWRYGPARLWYDMLGVSEDGSGFDYGFKLRKTQHEPVIKSRMMEEFRKLEESNGTDLLADENFLMVTQLHWEDSIIWDGEDIKHKGTKPQGASLAGWLPSIKTRNVMAYNVQQGFAPTLDDDKPWYSIFPIDNEDLVYGRWEDNIIWDAQAMPRLLEPPVLALDPNDENLILEIPDEKEEATSNSPSKESKKESSLKKSRILLGKTGVIREEPQQNMSQPEVKDPWNLSNDEYYFPKQQGLRGTFGGNIIQHSIPAMELWQPFFPTHMGPIKIRQFHRPPLKKYSFGALSQPGPHSVQPLLKHIKKKAKMREQERQASGGGELFFMRTPQDLTGKDGDLILAEYSEENGPLMMQVGMATKIKNYYKRKPGKDPGAPDCKYGETVYCHTSPFLGSLHPGQLLQALENNLFRAPVYLHKMPETDFLIIRTRQGYYIRELVDIFVVGQQCPLFEVPGPNSRRANMHIRDFLQVFIYRLFWKSKDRPRRIRMEDIKKAFPSHSESSIRKRLKLCADFKRTGMDSNWWVLKSDFRLPTEEEIRAKVSPEQCCAYYSMIAAKQRLKDAGYGEKSFFAPEEENEEDFQMKIDDEVHAAPWNTTRAFIAAMKGKCLLEVTGVADPTGCGEGFSYVKIPNKPTQQKDDKEPQAVKKTVTGTDADLRRLSLKNAKQLLRKFGVPEEEIKKLSRWEVIDVVRTMSTEQAHSGEGPMSKFARGSRFSVAEHQERYKEECQRIFDLQNKVLSSTEVLSTDTDSISAEDSDFEEMGKNIENMLQNKKTSSQLSREWEEQERKELRRMLLVAGSAASGNNHRDDVTASMTSLKSSATGHCLKIYRTFRDEEGKEYVRCETVRKPAVIDAYVRIRTTKDEKFIQKFALFDEKHREEMRKERRRIQEQLRRLKRNQEKEKLKGPPEKKPKKMKERPDLKLKCGACGAIGHMRTNKFCPLYYQTNVPPSKPVAMTEEQEEELEKTVIHNDNEELIKVEGTKIVFGKQLIENVHEVRRKSLVLKFPKQQLPPKKKRRVGTTVHCDYLNIPHKSIHRRRTDPMVTLSSILESIINDMRDLPNTHPFHTPVNAKVVKDYYKIITRPMDLQTLRENVRKCLYPSREEFREHLELIVKNSATYNGPKHSLTQISQSMLDLCDEKLKEKEDKLARLEKAINPLLDDDDQVAFSFILDNIVTQKMMAVPDSWPFHHPVNKKFVPDYYKMIVNPVDLETIRKNISKHKYQSRESFLDDVNLILANSVKYNGPESQYTKTAQEIVNICYQTITEYDEHLTQLEKDICTAKEAALEEAELESLDPMTPGPYTSQPPDMYDTNTSLSTSRDASVFQDESNLSVLDISTATPEKQMCQGQGRLGEEDSDVDVEGYDDEEEDGKPKPPAPEGGDGDLADEEEGTVQQPEASVLYEDLLISEGEDDEEDAGSDEEGDNPFSAIQLSESGSDSDVGYGGIRPKQPFMLQHASGEHKDGHGK</sequence>
<organism>
    <name type="scientific">Homo sapiens</name>
    <name type="common">Human</name>
    <dbReference type="NCBI Taxonomy" id="9606"/>
    <lineage>
        <taxon>Eukaryota</taxon>
        <taxon>Metazoa</taxon>
        <taxon>Chordata</taxon>
        <taxon>Craniata</taxon>
        <taxon>Vertebrata</taxon>
        <taxon>Euteleostomi</taxon>
        <taxon>Mammalia</taxon>
        <taxon>Eutheria</taxon>
        <taxon>Euarchontoglires</taxon>
        <taxon>Primates</taxon>
        <taxon>Haplorrhini</taxon>
        <taxon>Catarrhini</taxon>
        <taxon>Hominidae</taxon>
        <taxon>Homo</taxon>
    </lineage>
</organism>
<keyword id="KW-0002">3D-structure</keyword>
<keyword id="KW-0103">Bromodomain</keyword>
<keyword id="KW-0131">Cell cycle</keyword>
<keyword id="KW-0238">DNA-binding</keyword>
<keyword id="KW-0539">Nucleus</keyword>
<keyword id="KW-1267">Proteomics identification</keyword>
<keyword id="KW-1185">Reference proteome</keyword>
<keyword id="KW-0677">Repeat</keyword>
<keyword id="KW-0804">Transcription</keyword>
<keyword id="KW-0805">Transcription regulation</keyword>
<gene>
    <name type="primary">TAF1L</name>
</gene>
<evidence type="ECO:0000250" key="1"/>
<evidence type="ECO:0000255" key="2"/>
<evidence type="ECO:0000255" key="3">
    <source>
        <dbReference type="PROSITE-ProRule" id="PRU00035"/>
    </source>
</evidence>
<evidence type="ECO:0000256" key="4">
    <source>
        <dbReference type="SAM" id="MobiDB-lite"/>
    </source>
</evidence>
<evidence type="ECO:0000269" key="5">
    <source>
    </source>
</evidence>
<evidence type="ECO:0000269" key="6">
    <source>
    </source>
</evidence>
<evidence type="ECO:0000269" key="7">
    <source>
    </source>
</evidence>
<evidence type="ECO:0000305" key="8"/>
<evidence type="ECO:0007829" key="9">
    <source>
        <dbReference type="PDB" id="3HMH"/>
    </source>
</evidence>
<accession>Q8IZX4</accession>
<accession>Q0VG57</accession>
<reference key="1">
    <citation type="journal article" date="2002" name="Hum. Mol. Genet.">
        <title>Functional substitution for TAF(II)250 by a retroposed homolog that is expressed in human spermatogenesis.</title>
        <authorList>
            <person name="Wang P.J."/>
            <person name="Page D.C."/>
        </authorList>
    </citation>
    <scope>NUCLEOTIDE SEQUENCE [MRNA]</scope>
    <scope>FUNCTION</scope>
    <scope>INTERACTION WITH TBP</scope>
    <source>
        <tissue>Testis</tissue>
    </source>
</reference>
<reference key="2">
    <citation type="journal article" date="2012" name="Cell">
        <title>Histone recognition and large-scale structural analysis of the human bromodomain family.</title>
        <authorList>
            <person name="Filippakopoulos P."/>
            <person name="Picaud S."/>
            <person name="Mangos M."/>
            <person name="Keates T."/>
            <person name="Lambert J.P."/>
            <person name="Barsyte-Lovejoy D."/>
            <person name="Felletar I."/>
            <person name="Volkmer R."/>
            <person name="Muller S."/>
            <person name="Pawson T."/>
            <person name="Gingras A.C."/>
            <person name="Arrowsmith C.H."/>
            <person name="Knapp S."/>
        </authorList>
    </citation>
    <scope>X-RAY CRYSTALLOGRAPHY (2.05 ANGSTROMS) OF 1523-1654</scope>
    <scope>SUBUNIT</scope>
</reference>
<reference key="3">
    <citation type="journal article" date="2007" name="Nature">
        <title>Patterns of somatic mutation in human cancer genomes.</title>
        <authorList>
            <person name="Greenman C."/>
            <person name="Stephens P."/>
            <person name="Smith R."/>
            <person name="Dalgliesh G.L."/>
            <person name="Hunter C."/>
            <person name="Bignell G."/>
            <person name="Davies H."/>
            <person name="Teague J."/>
            <person name="Butler A."/>
            <person name="Stevens C."/>
            <person name="Edkins S."/>
            <person name="O'Meara S."/>
            <person name="Vastrik I."/>
            <person name="Schmidt E.E."/>
            <person name="Avis T."/>
            <person name="Barthorpe S."/>
            <person name="Bhamra G."/>
            <person name="Buck G."/>
            <person name="Choudhury B."/>
            <person name="Clements J."/>
            <person name="Cole J."/>
            <person name="Dicks E."/>
            <person name="Forbes S."/>
            <person name="Gray K."/>
            <person name="Halliday K."/>
            <person name="Harrison R."/>
            <person name="Hills K."/>
            <person name="Hinton J."/>
            <person name="Jenkinson A."/>
            <person name="Jones D."/>
            <person name="Menzies A."/>
            <person name="Mironenko T."/>
            <person name="Perry J."/>
            <person name="Raine K."/>
            <person name="Richardson D."/>
            <person name="Shepherd R."/>
            <person name="Small A."/>
            <person name="Tofts C."/>
            <person name="Varian J."/>
            <person name="Webb T."/>
            <person name="West S."/>
            <person name="Widaa S."/>
            <person name="Yates A."/>
            <person name="Cahill D.P."/>
            <person name="Louis D.N."/>
            <person name="Goldstraw P."/>
            <person name="Nicholson A.G."/>
            <person name="Brasseur F."/>
            <person name="Looijenga L."/>
            <person name="Weber B.L."/>
            <person name="Chiew Y.-E."/>
            <person name="DeFazio A."/>
            <person name="Greaves M.F."/>
            <person name="Green A.R."/>
            <person name="Campbell P."/>
            <person name="Birney E."/>
            <person name="Easton D.F."/>
            <person name="Chenevix-Trench G."/>
            <person name="Tan M.-H."/>
            <person name="Khoo S.K."/>
            <person name="Teh B.T."/>
            <person name="Yuen S.T."/>
            <person name="Leung S.Y."/>
            <person name="Wooster R."/>
            <person name="Futreal P.A."/>
            <person name="Stratton M.R."/>
        </authorList>
    </citation>
    <scope>VARIANTS [LARGE SCALE ANALYSIS] ALA-47; GLU-171; ALA-256; VAL-371; ASN-532; SER-637; PHE-750; ILE-762; ASP-794; GLN-845; CYS-1016; ASN-1038; ILE-1169; LEU-1312; CYS-1356; SER-1389; VAL-1411; THR-1540; TYR-1549; ASN-1731; LEU-1810 AND GLN-1824</scope>
</reference>
<feature type="chain" id="PRO_0000211217" description="Transcription initiation factor TFIID subunit 1-like">
    <location>
        <begin position="1"/>
        <end position="1826"/>
    </location>
</feature>
<feature type="domain" description="Bromo 1" evidence="3">
    <location>
        <begin position="1395"/>
        <end position="1503"/>
    </location>
</feature>
<feature type="domain" description="Bromo 2" evidence="3">
    <location>
        <begin position="1517"/>
        <end position="1626"/>
    </location>
</feature>
<feature type="region of interest" description="Disordered" evidence="4">
    <location>
        <begin position="118"/>
        <end position="141"/>
    </location>
</feature>
<feature type="region of interest" description="Disordered" evidence="4">
    <location>
        <begin position="532"/>
        <end position="555"/>
    </location>
</feature>
<feature type="region of interest" description="Disordered" evidence="4">
    <location>
        <begin position="1252"/>
        <end position="1276"/>
    </location>
</feature>
<feature type="region of interest" description="Disordered" evidence="4">
    <location>
        <begin position="1648"/>
        <end position="1826"/>
    </location>
</feature>
<feature type="short sequence motif" description="Nuclear localization signal" evidence="2">
    <location>
        <begin position="1370"/>
        <end position="1377"/>
    </location>
</feature>
<feature type="compositionally biased region" description="Basic and acidic residues" evidence="4">
    <location>
        <begin position="1252"/>
        <end position="1268"/>
    </location>
</feature>
<feature type="compositionally biased region" description="Polar residues" evidence="4">
    <location>
        <begin position="1660"/>
        <end position="1700"/>
    </location>
</feature>
<feature type="compositionally biased region" description="Acidic residues" evidence="4">
    <location>
        <begin position="1714"/>
        <end position="1729"/>
    </location>
</feature>
<feature type="compositionally biased region" description="Acidic residues" evidence="4">
    <location>
        <begin position="1740"/>
        <end position="1750"/>
    </location>
</feature>
<feature type="compositionally biased region" description="Acidic residues" evidence="4">
    <location>
        <begin position="1768"/>
        <end position="1783"/>
    </location>
</feature>
<feature type="compositionally biased region" description="Polar residues" evidence="4">
    <location>
        <begin position="1787"/>
        <end position="1797"/>
    </location>
</feature>
<feature type="compositionally biased region" description="Basic and acidic residues" evidence="4">
    <location>
        <begin position="1817"/>
        <end position="1826"/>
    </location>
</feature>
<feature type="sequence variant" id="VAR_041934" description="In a lung small cell carcinoma sample; somatic mutation." evidence="6">
    <original>G</original>
    <variation>A</variation>
    <location>
        <position position="47"/>
    </location>
</feature>
<feature type="sequence variant" id="VAR_041935" description="In dbSNP:rs56352331." evidence="6">
    <original>Q</original>
    <variation>E</variation>
    <location>
        <position position="171"/>
    </location>
</feature>
<feature type="sequence variant" id="VAR_041936" description="In dbSNP:rs55991718." evidence="6">
    <original>G</original>
    <variation>A</variation>
    <location>
        <position position="256"/>
    </location>
</feature>
<feature type="sequence variant" id="VAR_041937" description="In dbSNP:rs17219559." evidence="6">
    <original>M</original>
    <variation>V</variation>
    <location>
        <position position="371"/>
    </location>
</feature>
<feature type="sequence variant" id="VAR_041938" description="In dbSNP:rs56128445." evidence="6">
    <original>I</original>
    <variation>N</variation>
    <location>
        <position position="532"/>
    </location>
</feature>
<feature type="sequence variant" id="VAR_041939" description="In dbSNP:rs56157814." evidence="6">
    <original>P</original>
    <variation>S</variation>
    <location>
        <position position="637"/>
    </location>
</feature>
<feature type="sequence variant" id="VAR_041940" description="In a lung adenocarcinoma sample; somatic mutation." evidence="6">
    <original>L</original>
    <variation>F</variation>
    <location>
        <position position="750"/>
    </location>
</feature>
<feature type="sequence variant" id="VAR_041941" description="In a lung adenocarcinoma sample; somatic mutation." evidence="6">
    <original>L</original>
    <variation>I</variation>
    <location>
        <position position="762"/>
    </location>
</feature>
<feature type="sequence variant" id="VAR_041942" description="In a lung adenocarcinoma sample; somatic mutation." evidence="6">
    <original>E</original>
    <variation>D</variation>
    <location>
        <position position="794"/>
    </location>
</feature>
<feature type="sequence variant" id="VAR_041943" description="In dbSNP:rs34787787." evidence="6">
    <original>R</original>
    <variation>Q</variation>
    <location>
        <position position="845"/>
    </location>
</feature>
<feature type="sequence variant" id="VAR_041944" description="In dbSNP:rs35905429." evidence="6">
    <original>R</original>
    <variation>C</variation>
    <location>
        <position position="1016"/>
    </location>
</feature>
<feature type="sequence variant" id="VAR_041945" description="In dbSNP:rs55767137." evidence="6">
    <original>K</original>
    <variation>N</variation>
    <location>
        <position position="1038"/>
    </location>
</feature>
<feature type="sequence variant" id="VAR_041946" description="In dbSNP:rs55976674." evidence="6">
    <original>T</original>
    <variation>I</variation>
    <location>
        <position position="1169"/>
    </location>
</feature>
<feature type="sequence variant" id="VAR_041947" description="In dbSNP:rs55824107." evidence="6">
    <original>V</original>
    <variation>L</variation>
    <location>
        <position position="1312"/>
    </location>
</feature>
<feature type="sequence variant" id="VAR_041948" description="In dbSNP:rs56107531." evidence="6">
    <original>R</original>
    <variation>C</variation>
    <location>
        <position position="1356"/>
    </location>
</feature>
<feature type="sequence variant" id="VAR_041949" description="In dbSNP:rs56393725." evidence="6">
    <original>P</original>
    <variation>S</variation>
    <location>
        <position position="1389"/>
    </location>
</feature>
<feature type="sequence variant" id="VAR_041950" description="In dbSNP:rs34500740." evidence="6">
    <original>I</original>
    <variation>V</variation>
    <location>
        <position position="1411"/>
    </location>
</feature>
<feature type="sequence variant" id="VAR_041951" description="In dbSNP:rs55782058." evidence="6">
    <original>A</original>
    <variation>T</variation>
    <location>
        <position position="1540"/>
    </location>
</feature>
<feature type="sequence variant" id="VAR_041952" description="In a glioblastoma multiforme sample; somatic mutation; dbSNP:rs1587670372." evidence="6">
    <original>H</original>
    <variation>Y</variation>
    <location>
        <position position="1549"/>
    </location>
</feature>
<feature type="sequence variant" id="VAR_041953" description="In dbSNP:rs34241003." evidence="6">
    <original>K</original>
    <variation>N</variation>
    <location>
        <position position="1731"/>
    </location>
</feature>
<feature type="sequence variant" id="VAR_048435" description="In dbSNP:rs16918393.">
    <original>I</original>
    <variation>V</variation>
    <location>
        <position position="1805"/>
    </location>
</feature>
<feature type="sequence variant" id="VAR_041954" description="In dbSNP:rs56342342." evidence="6">
    <original>P</original>
    <variation>L</variation>
    <location>
        <position position="1810"/>
    </location>
</feature>
<feature type="sequence variant" id="VAR_041955" description="In a lung adenocarcinoma sample; somatic mutation; dbSNP:rs202147126." evidence="6">
    <original>H</original>
    <variation>Q</variation>
    <location>
        <position position="1824"/>
    </location>
</feature>
<feature type="helix" evidence="9">
    <location>
        <begin position="1523"/>
        <end position="1536"/>
    </location>
</feature>
<feature type="turn" evidence="9">
    <location>
        <begin position="1537"/>
        <end position="1540"/>
    </location>
</feature>
<feature type="helix" evidence="9">
    <location>
        <begin position="1545"/>
        <end position="1547"/>
    </location>
</feature>
<feature type="turn" evidence="9">
    <location>
        <begin position="1553"/>
        <end position="1555"/>
    </location>
</feature>
<feature type="helix" evidence="9">
    <location>
        <begin position="1557"/>
        <end position="1562"/>
    </location>
</feature>
<feature type="helix" evidence="9">
    <location>
        <begin position="1569"/>
        <end position="1577"/>
    </location>
</feature>
<feature type="helix" evidence="9">
    <location>
        <begin position="1584"/>
        <end position="1602"/>
    </location>
</feature>
<feature type="helix" evidence="9">
    <location>
        <begin position="1607"/>
        <end position="1625"/>
    </location>
</feature>
<feature type="helix" evidence="9">
    <location>
        <begin position="1627"/>
        <end position="1649"/>
    </location>
</feature>
<proteinExistence type="evidence at protein level"/>
<comment type="function">
    <text evidence="5">May act as a functional substitute for TAF1/TAFII250 during male meiosis, when sex chromosomes are transcriptionally silenced.</text>
</comment>
<comment type="subunit">
    <text evidence="5 7">Can bind directly to TATA-box binding protein (TBP). Interacts (via bromo domains) with acetylated lysine residues on the N-terminus of histone H1.4, H2A, H2B, H3 and H4 (in vitro).</text>
</comment>
<comment type="subcellular location">
    <subcellularLocation>
        <location evidence="1">Nucleus</location>
    </subcellularLocation>
</comment>
<comment type="tissue specificity">
    <text>Testis specific, expressed apparently in germ cells.</text>
</comment>
<comment type="similarity">
    <text evidence="8">Belongs to the TAF1 family.</text>
</comment>
<name>TAF1L_HUMAN</name>